<organism>
    <name type="scientific">Burkholderia mallei (strain ATCC 23344)</name>
    <dbReference type="NCBI Taxonomy" id="243160"/>
    <lineage>
        <taxon>Bacteria</taxon>
        <taxon>Pseudomonadati</taxon>
        <taxon>Pseudomonadota</taxon>
        <taxon>Betaproteobacteria</taxon>
        <taxon>Burkholderiales</taxon>
        <taxon>Burkholderiaceae</taxon>
        <taxon>Burkholderia</taxon>
        <taxon>pseudomallei group</taxon>
    </lineage>
</organism>
<accession>Q62CH8</accession>
<name>BETA_BURMA</name>
<feature type="chain" id="PRO_0000258918" description="Oxygen-dependent choline dehydrogenase">
    <location>
        <begin position="1"/>
        <end position="565"/>
    </location>
</feature>
<feature type="active site" description="Proton acceptor" evidence="1">
    <location>
        <position position="474"/>
    </location>
</feature>
<feature type="binding site" evidence="1">
    <location>
        <begin position="7"/>
        <end position="36"/>
    </location>
    <ligand>
        <name>FAD</name>
        <dbReference type="ChEBI" id="CHEBI:57692"/>
    </ligand>
</feature>
<comment type="function">
    <text evidence="1">Involved in the biosynthesis of the osmoprotectant glycine betaine. Catalyzes the oxidation of choline to betaine aldehyde and betaine aldehyde to glycine betaine at the same rate.</text>
</comment>
<comment type="catalytic activity">
    <reaction evidence="1">
        <text>choline + A = betaine aldehyde + AH2</text>
        <dbReference type="Rhea" id="RHEA:17433"/>
        <dbReference type="ChEBI" id="CHEBI:13193"/>
        <dbReference type="ChEBI" id="CHEBI:15354"/>
        <dbReference type="ChEBI" id="CHEBI:15710"/>
        <dbReference type="ChEBI" id="CHEBI:17499"/>
        <dbReference type="EC" id="1.1.99.1"/>
    </reaction>
</comment>
<comment type="catalytic activity">
    <reaction evidence="1">
        <text>betaine aldehyde + NAD(+) + H2O = glycine betaine + NADH + 2 H(+)</text>
        <dbReference type="Rhea" id="RHEA:15305"/>
        <dbReference type="ChEBI" id="CHEBI:15377"/>
        <dbReference type="ChEBI" id="CHEBI:15378"/>
        <dbReference type="ChEBI" id="CHEBI:15710"/>
        <dbReference type="ChEBI" id="CHEBI:17750"/>
        <dbReference type="ChEBI" id="CHEBI:57540"/>
        <dbReference type="ChEBI" id="CHEBI:57945"/>
        <dbReference type="EC" id="1.2.1.8"/>
    </reaction>
</comment>
<comment type="cofactor">
    <cofactor evidence="1">
        <name>FAD</name>
        <dbReference type="ChEBI" id="CHEBI:57692"/>
    </cofactor>
</comment>
<comment type="pathway">
    <text evidence="1">Amine and polyamine biosynthesis; betaine biosynthesis via choline pathway; betaine aldehyde from choline (cytochrome c reductase route): step 1/1.</text>
</comment>
<comment type="similarity">
    <text evidence="1">Belongs to the GMC oxidoreductase family.</text>
</comment>
<dbReference type="EC" id="1.1.99.1" evidence="1"/>
<dbReference type="EC" id="1.2.1.8" evidence="1"/>
<dbReference type="EMBL" id="CP000011">
    <property type="protein sequence ID" value="AAU46696.1"/>
    <property type="molecule type" value="Genomic_DNA"/>
</dbReference>
<dbReference type="RefSeq" id="WP_004188051.1">
    <property type="nucleotide sequence ID" value="NC_006349.2"/>
</dbReference>
<dbReference type="RefSeq" id="YP_105600.1">
    <property type="nucleotide sequence ID" value="NC_006349.2"/>
</dbReference>
<dbReference type="SMR" id="Q62CH8"/>
<dbReference type="GeneID" id="92976422"/>
<dbReference type="KEGG" id="bma:BMAA0914"/>
<dbReference type="PATRIC" id="fig|243160.12.peg.4430"/>
<dbReference type="eggNOG" id="COG2303">
    <property type="taxonomic scope" value="Bacteria"/>
</dbReference>
<dbReference type="HOGENOM" id="CLU_002865_7_1_4"/>
<dbReference type="UniPathway" id="UPA00529">
    <property type="reaction ID" value="UER00385"/>
</dbReference>
<dbReference type="Proteomes" id="UP000006693">
    <property type="component" value="Chromosome 2"/>
</dbReference>
<dbReference type="GO" id="GO:0016020">
    <property type="term" value="C:membrane"/>
    <property type="evidence" value="ECO:0007669"/>
    <property type="project" value="TreeGrafter"/>
</dbReference>
<dbReference type="GO" id="GO:0008802">
    <property type="term" value="F:betaine-aldehyde dehydrogenase (NAD+) activity"/>
    <property type="evidence" value="ECO:0007669"/>
    <property type="project" value="UniProtKB-EC"/>
</dbReference>
<dbReference type="GO" id="GO:0008812">
    <property type="term" value="F:choline dehydrogenase activity"/>
    <property type="evidence" value="ECO:0007669"/>
    <property type="project" value="UniProtKB-UniRule"/>
</dbReference>
<dbReference type="GO" id="GO:0050660">
    <property type="term" value="F:flavin adenine dinucleotide binding"/>
    <property type="evidence" value="ECO:0007669"/>
    <property type="project" value="InterPro"/>
</dbReference>
<dbReference type="GO" id="GO:0019285">
    <property type="term" value="P:glycine betaine biosynthetic process from choline"/>
    <property type="evidence" value="ECO:0007669"/>
    <property type="project" value="UniProtKB-UniRule"/>
</dbReference>
<dbReference type="Gene3D" id="3.50.50.60">
    <property type="entry name" value="FAD/NAD(P)-binding domain"/>
    <property type="match status" value="1"/>
</dbReference>
<dbReference type="Gene3D" id="3.30.560.10">
    <property type="entry name" value="Glucose Oxidase, domain 3"/>
    <property type="match status" value="1"/>
</dbReference>
<dbReference type="HAMAP" id="MF_00750">
    <property type="entry name" value="Choline_dehydrogen"/>
    <property type="match status" value="1"/>
</dbReference>
<dbReference type="InterPro" id="IPR011533">
    <property type="entry name" value="BetA"/>
</dbReference>
<dbReference type="InterPro" id="IPR036188">
    <property type="entry name" value="FAD/NAD-bd_sf"/>
</dbReference>
<dbReference type="InterPro" id="IPR012132">
    <property type="entry name" value="GMC_OxRdtase"/>
</dbReference>
<dbReference type="InterPro" id="IPR000172">
    <property type="entry name" value="GMC_OxRdtase_N"/>
</dbReference>
<dbReference type="InterPro" id="IPR007867">
    <property type="entry name" value="GMC_OxRtase_C"/>
</dbReference>
<dbReference type="NCBIfam" id="TIGR01810">
    <property type="entry name" value="betA"/>
    <property type="match status" value="1"/>
</dbReference>
<dbReference type="NCBIfam" id="NF002550">
    <property type="entry name" value="PRK02106.1"/>
    <property type="match status" value="1"/>
</dbReference>
<dbReference type="PANTHER" id="PTHR11552:SF147">
    <property type="entry name" value="CHOLINE DEHYDROGENASE, MITOCHONDRIAL"/>
    <property type="match status" value="1"/>
</dbReference>
<dbReference type="PANTHER" id="PTHR11552">
    <property type="entry name" value="GLUCOSE-METHANOL-CHOLINE GMC OXIDOREDUCTASE"/>
    <property type="match status" value="1"/>
</dbReference>
<dbReference type="Pfam" id="PF05199">
    <property type="entry name" value="GMC_oxred_C"/>
    <property type="match status" value="1"/>
</dbReference>
<dbReference type="Pfam" id="PF00732">
    <property type="entry name" value="GMC_oxred_N"/>
    <property type="match status" value="1"/>
</dbReference>
<dbReference type="PIRSF" id="PIRSF000137">
    <property type="entry name" value="Alcohol_oxidase"/>
    <property type="match status" value="1"/>
</dbReference>
<dbReference type="SUPFAM" id="SSF54373">
    <property type="entry name" value="FAD-linked reductases, C-terminal domain"/>
    <property type="match status" value="1"/>
</dbReference>
<dbReference type="SUPFAM" id="SSF51905">
    <property type="entry name" value="FAD/NAD(P)-binding domain"/>
    <property type="match status" value="1"/>
</dbReference>
<dbReference type="PROSITE" id="PS00623">
    <property type="entry name" value="GMC_OXRED_1"/>
    <property type="match status" value="1"/>
</dbReference>
<dbReference type="PROSITE" id="PS00624">
    <property type="entry name" value="GMC_OXRED_2"/>
    <property type="match status" value="1"/>
</dbReference>
<reference key="1">
    <citation type="journal article" date="2004" name="Proc. Natl. Acad. Sci. U.S.A.">
        <title>Structural flexibility in the Burkholderia mallei genome.</title>
        <authorList>
            <person name="Nierman W.C."/>
            <person name="DeShazer D."/>
            <person name="Kim H.S."/>
            <person name="Tettelin H."/>
            <person name="Nelson K.E."/>
            <person name="Feldblyum T.V."/>
            <person name="Ulrich R.L."/>
            <person name="Ronning C.M."/>
            <person name="Brinkac L.M."/>
            <person name="Daugherty S.C."/>
            <person name="Davidsen T.D."/>
            <person name="DeBoy R.T."/>
            <person name="Dimitrov G."/>
            <person name="Dodson R.J."/>
            <person name="Durkin A.S."/>
            <person name="Gwinn M.L."/>
            <person name="Haft D.H."/>
            <person name="Khouri H.M."/>
            <person name="Kolonay J.F."/>
            <person name="Madupu R."/>
            <person name="Mohammoud Y."/>
            <person name="Nelson W.C."/>
            <person name="Radune D."/>
            <person name="Romero C.M."/>
            <person name="Sarria S."/>
            <person name="Selengut J."/>
            <person name="Shamblin C."/>
            <person name="Sullivan S.A."/>
            <person name="White O."/>
            <person name="Yu Y."/>
            <person name="Zafar N."/>
            <person name="Zhou L."/>
            <person name="Fraser C.M."/>
        </authorList>
    </citation>
    <scope>NUCLEOTIDE SEQUENCE [LARGE SCALE GENOMIC DNA]</scope>
    <source>
        <strain>ATCC 23344</strain>
    </source>
</reference>
<gene>
    <name evidence="1" type="primary">betA</name>
    <name type="ordered locus">BMAA0914</name>
</gene>
<keyword id="KW-0274">FAD</keyword>
<keyword id="KW-0285">Flavoprotein</keyword>
<keyword id="KW-0520">NAD</keyword>
<keyword id="KW-0560">Oxidoreductase</keyword>
<keyword id="KW-1185">Reference proteome</keyword>
<evidence type="ECO:0000255" key="1">
    <source>
        <dbReference type="HAMAP-Rule" id="MF_00750"/>
    </source>
</evidence>
<sequence>MTTREFDYIICGAGSAGNVLATRLTEDPGVTVLLLEAGGPDYRFDFRTQMPAALAYPLQGRRYNWAYETDPEPHMNHRRMECGRGKGLGGSSLINGMCYIRGNALDYDNWATHKGLEDWAYLDCLPYFRKAETRDVGPNDYHGGDGPVSVTTSKPGVNPLFEAMVEAGVQAGYPRTDDLNGYQQEGFGPMDRTVTPRGRRASTARGYLDQARARPNLEIVTHALADRILFSGKRATGVTFLHGSARVTAHARREVLVCSGAIASPQLLQRSGVGPGEWLRELDIPVVLDLPGVGRNLQDHLEMYIQFECKEPVSLYPALKWWNQPKIGLEWMLNGTGLGASNHFEAGGFIRTRDDDPWPNIQYHFLPVAINYNGSNAIEMHGFQAHVGSMRSPSCGRVKLKSRDPHAHPSILFNYMAEALDWREFRDAIRATREIMRQPALDRFRGRELNPGADLKSDNELDTFVRARAETAFHPSCSCKMGYDDMAVVDNEGRVHGIDGLRVVDASIMPIITTGNLNAPTIMIAEKIADRIRKHKPLERSNAQYYVANGAPARGGKPARAPAVV</sequence>
<proteinExistence type="inferred from homology"/>
<protein>
    <recommendedName>
        <fullName evidence="1">Oxygen-dependent choline dehydrogenase</fullName>
        <shortName evidence="1">CDH</shortName>
        <shortName evidence="1">CHD</shortName>
        <ecNumber evidence="1">1.1.99.1</ecNumber>
    </recommendedName>
    <alternativeName>
        <fullName evidence="1">Betaine aldehyde dehydrogenase</fullName>
        <shortName evidence="1">BADH</shortName>
        <ecNumber evidence="1">1.2.1.8</ecNumber>
    </alternativeName>
</protein>